<reference key="1">
    <citation type="journal article" date="2011" name="J. Bacteriol.">
        <title>Comparative genomics of 28 Salmonella enterica isolates: evidence for CRISPR-mediated adaptive sublineage evolution.</title>
        <authorList>
            <person name="Fricke W.F."/>
            <person name="Mammel M.K."/>
            <person name="McDermott P.F."/>
            <person name="Tartera C."/>
            <person name="White D.G."/>
            <person name="Leclerc J.E."/>
            <person name="Ravel J."/>
            <person name="Cebula T.A."/>
        </authorList>
    </citation>
    <scope>NUCLEOTIDE SEQUENCE [LARGE SCALE GENOMIC DNA]</scope>
    <source>
        <strain>SL254</strain>
    </source>
</reference>
<sequence length="155" mass="17510">MLKQVEIFTDGSCLGNPGPGGYGAILRYRGHEKTFSEGYTLTTNNRMELMAAIVALEALKEHCEVTLSTDSQYVRQGITQWIHNWKKRGWKTAEKKPVKNVDLWKRLDAALGQHQIKWVWVKGHAGHPENERCDELARAAAMNPTQEDSGYQAEA</sequence>
<dbReference type="EC" id="3.1.26.4" evidence="1"/>
<dbReference type="EMBL" id="CP001113">
    <property type="protein sequence ID" value="ACF61504.1"/>
    <property type="molecule type" value="Genomic_DNA"/>
</dbReference>
<dbReference type="RefSeq" id="WP_000917872.1">
    <property type="nucleotide sequence ID" value="NZ_CCMR01000003.1"/>
</dbReference>
<dbReference type="SMR" id="B4SV39"/>
<dbReference type="KEGG" id="see:SNSL254_A0288"/>
<dbReference type="HOGENOM" id="CLU_030894_6_0_6"/>
<dbReference type="Proteomes" id="UP000008824">
    <property type="component" value="Chromosome"/>
</dbReference>
<dbReference type="GO" id="GO:0005737">
    <property type="term" value="C:cytoplasm"/>
    <property type="evidence" value="ECO:0007669"/>
    <property type="project" value="UniProtKB-SubCell"/>
</dbReference>
<dbReference type="GO" id="GO:0000287">
    <property type="term" value="F:magnesium ion binding"/>
    <property type="evidence" value="ECO:0007669"/>
    <property type="project" value="UniProtKB-UniRule"/>
</dbReference>
<dbReference type="GO" id="GO:0003676">
    <property type="term" value="F:nucleic acid binding"/>
    <property type="evidence" value="ECO:0007669"/>
    <property type="project" value="InterPro"/>
</dbReference>
<dbReference type="GO" id="GO:0004523">
    <property type="term" value="F:RNA-DNA hybrid ribonuclease activity"/>
    <property type="evidence" value="ECO:0007669"/>
    <property type="project" value="UniProtKB-UniRule"/>
</dbReference>
<dbReference type="GO" id="GO:0043137">
    <property type="term" value="P:DNA replication, removal of RNA primer"/>
    <property type="evidence" value="ECO:0007669"/>
    <property type="project" value="TreeGrafter"/>
</dbReference>
<dbReference type="CDD" id="cd09278">
    <property type="entry name" value="RNase_HI_prokaryote_like"/>
    <property type="match status" value="1"/>
</dbReference>
<dbReference type="FunFam" id="3.30.420.10:FF:000008">
    <property type="entry name" value="Ribonuclease H"/>
    <property type="match status" value="1"/>
</dbReference>
<dbReference type="Gene3D" id="3.30.420.10">
    <property type="entry name" value="Ribonuclease H-like superfamily/Ribonuclease H"/>
    <property type="match status" value="1"/>
</dbReference>
<dbReference type="HAMAP" id="MF_00042">
    <property type="entry name" value="RNase_H"/>
    <property type="match status" value="1"/>
</dbReference>
<dbReference type="InterPro" id="IPR050092">
    <property type="entry name" value="RNase_H"/>
</dbReference>
<dbReference type="InterPro" id="IPR012337">
    <property type="entry name" value="RNaseH-like_sf"/>
</dbReference>
<dbReference type="InterPro" id="IPR002156">
    <property type="entry name" value="RNaseH_domain"/>
</dbReference>
<dbReference type="InterPro" id="IPR036397">
    <property type="entry name" value="RNaseH_sf"/>
</dbReference>
<dbReference type="InterPro" id="IPR022892">
    <property type="entry name" value="RNaseHI"/>
</dbReference>
<dbReference type="NCBIfam" id="NF001236">
    <property type="entry name" value="PRK00203.1"/>
    <property type="match status" value="1"/>
</dbReference>
<dbReference type="PANTHER" id="PTHR10642">
    <property type="entry name" value="RIBONUCLEASE H1"/>
    <property type="match status" value="1"/>
</dbReference>
<dbReference type="PANTHER" id="PTHR10642:SF26">
    <property type="entry name" value="RIBONUCLEASE H1"/>
    <property type="match status" value="1"/>
</dbReference>
<dbReference type="Pfam" id="PF00075">
    <property type="entry name" value="RNase_H"/>
    <property type="match status" value="1"/>
</dbReference>
<dbReference type="SUPFAM" id="SSF53098">
    <property type="entry name" value="Ribonuclease H-like"/>
    <property type="match status" value="1"/>
</dbReference>
<dbReference type="PROSITE" id="PS50879">
    <property type="entry name" value="RNASE_H_1"/>
    <property type="match status" value="1"/>
</dbReference>
<evidence type="ECO:0000255" key="1">
    <source>
        <dbReference type="HAMAP-Rule" id="MF_00042"/>
    </source>
</evidence>
<evidence type="ECO:0000255" key="2">
    <source>
        <dbReference type="PROSITE-ProRule" id="PRU00408"/>
    </source>
</evidence>
<keyword id="KW-0963">Cytoplasm</keyword>
<keyword id="KW-0255">Endonuclease</keyword>
<keyword id="KW-0378">Hydrolase</keyword>
<keyword id="KW-0460">Magnesium</keyword>
<keyword id="KW-0479">Metal-binding</keyword>
<keyword id="KW-0540">Nuclease</keyword>
<proteinExistence type="inferred from homology"/>
<gene>
    <name evidence="1" type="primary">rnhA</name>
    <name type="ordered locus">SNSL254_A0288</name>
</gene>
<organism>
    <name type="scientific">Salmonella newport (strain SL254)</name>
    <dbReference type="NCBI Taxonomy" id="423368"/>
    <lineage>
        <taxon>Bacteria</taxon>
        <taxon>Pseudomonadati</taxon>
        <taxon>Pseudomonadota</taxon>
        <taxon>Gammaproteobacteria</taxon>
        <taxon>Enterobacterales</taxon>
        <taxon>Enterobacteriaceae</taxon>
        <taxon>Salmonella</taxon>
    </lineage>
</organism>
<protein>
    <recommendedName>
        <fullName evidence="1">Ribonuclease H</fullName>
        <shortName evidence="1">RNase H</shortName>
        <ecNumber evidence="1">3.1.26.4</ecNumber>
    </recommendedName>
</protein>
<comment type="function">
    <text evidence="1">Endonuclease that specifically degrades the RNA of RNA-DNA hybrids.</text>
</comment>
<comment type="catalytic activity">
    <reaction evidence="1">
        <text>Endonucleolytic cleavage to 5'-phosphomonoester.</text>
        <dbReference type="EC" id="3.1.26.4"/>
    </reaction>
</comment>
<comment type="cofactor">
    <cofactor evidence="1">
        <name>Mg(2+)</name>
        <dbReference type="ChEBI" id="CHEBI:18420"/>
    </cofactor>
    <text evidence="1">Binds 1 Mg(2+) ion per subunit. May bind a second metal ion at a regulatory site, or after substrate binding.</text>
</comment>
<comment type="subunit">
    <text evidence="1">Monomer.</text>
</comment>
<comment type="subcellular location">
    <subcellularLocation>
        <location evidence="1">Cytoplasm</location>
    </subcellularLocation>
</comment>
<comment type="similarity">
    <text evidence="1">Belongs to the RNase H family.</text>
</comment>
<accession>B4SV39</accession>
<feature type="chain" id="PRO_1000090916" description="Ribonuclease H">
    <location>
        <begin position="1"/>
        <end position="155"/>
    </location>
</feature>
<feature type="domain" description="RNase H type-1" evidence="2">
    <location>
        <begin position="1"/>
        <end position="142"/>
    </location>
</feature>
<feature type="binding site" evidence="1">
    <location>
        <position position="10"/>
    </location>
    <ligand>
        <name>Mg(2+)</name>
        <dbReference type="ChEBI" id="CHEBI:18420"/>
        <label>1</label>
    </ligand>
</feature>
<feature type="binding site" evidence="1">
    <location>
        <position position="10"/>
    </location>
    <ligand>
        <name>Mg(2+)</name>
        <dbReference type="ChEBI" id="CHEBI:18420"/>
        <label>2</label>
    </ligand>
</feature>
<feature type="binding site" evidence="1">
    <location>
        <position position="48"/>
    </location>
    <ligand>
        <name>Mg(2+)</name>
        <dbReference type="ChEBI" id="CHEBI:18420"/>
        <label>1</label>
    </ligand>
</feature>
<feature type="binding site" evidence="1">
    <location>
        <position position="70"/>
    </location>
    <ligand>
        <name>Mg(2+)</name>
        <dbReference type="ChEBI" id="CHEBI:18420"/>
        <label>1</label>
    </ligand>
</feature>
<feature type="binding site" evidence="1">
    <location>
        <position position="134"/>
    </location>
    <ligand>
        <name>Mg(2+)</name>
        <dbReference type="ChEBI" id="CHEBI:18420"/>
        <label>2</label>
    </ligand>
</feature>
<name>RNH_SALNS</name>